<gene>
    <name evidence="1" type="primary">rpmJ</name>
    <name type="ordered locus">Pcryo_0505</name>
</gene>
<evidence type="ECO:0000255" key="1">
    <source>
        <dbReference type="HAMAP-Rule" id="MF_00251"/>
    </source>
</evidence>
<evidence type="ECO:0000305" key="2"/>
<feature type="chain" id="PRO_0000302276" description="Large ribosomal subunit protein bL36">
    <location>
        <begin position="1"/>
        <end position="38"/>
    </location>
</feature>
<organism>
    <name type="scientific">Psychrobacter cryohalolentis (strain ATCC BAA-1226 / DSM 17306 / VKM B-2378 / K5)</name>
    <dbReference type="NCBI Taxonomy" id="335284"/>
    <lineage>
        <taxon>Bacteria</taxon>
        <taxon>Pseudomonadati</taxon>
        <taxon>Pseudomonadota</taxon>
        <taxon>Gammaproteobacteria</taxon>
        <taxon>Moraxellales</taxon>
        <taxon>Moraxellaceae</taxon>
        <taxon>Psychrobacter</taxon>
    </lineage>
</organism>
<name>RL36_PSYCK</name>
<sequence length="38" mass="4317">MKVQASVKKICGSCKVVRRKGRVHIICTAEPRHKQRQG</sequence>
<protein>
    <recommendedName>
        <fullName evidence="1">Large ribosomal subunit protein bL36</fullName>
    </recommendedName>
    <alternativeName>
        <fullName evidence="2">50S ribosomal protein L36</fullName>
    </alternativeName>
</protein>
<proteinExistence type="inferred from homology"/>
<keyword id="KW-0687">Ribonucleoprotein</keyword>
<keyword id="KW-0689">Ribosomal protein</keyword>
<accession>Q1QDG5</accession>
<reference key="1">
    <citation type="submission" date="2006-03" db="EMBL/GenBank/DDBJ databases">
        <title>Complete sequence of chromosome of Psychrobacter cryohalolentis K5.</title>
        <authorList>
            <consortium name="US DOE Joint Genome Institute"/>
            <person name="Copeland A."/>
            <person name="Lucas S."/>
            <person name="Lapidus A."/>
            <person name="Barry K."/>
            <person name="Detter J.C."/>
            <person name="Glavina T."/>
            <person name="Hammon N."/>
            <person name="Israni S."/>
            <person name="Dalin E."/>
            <person name="Tice H."/>
            <person name="Pitluck S."/>
            <person name="Brettin T."/>
            <person name="Bruce D."/>
            <person name="Han C."/>
            <person name="Tapia R."/>
            <person name="Sims D.R."/>
            <person name="Gilna P."/>
            <person name="Schmutz J."/>
            <person name="Larimer F."/>
            <person name="Land M."/>
            <person name="Hauser L."/>
            <person name="Kyrpides N."/>
            <person name="Kim E."/>
            <person name="Richardson P."/>
        </authorList>
    </citation>
    <scope>NUCLEOTIDE SEQUENCE [LARGE SCALE GENOMIC DNA]</scope>
    <source>
        <strain>ATCC BAA-1226 / DSM 17306 / VKM B-2378 / K5</strain>
    </source>
</reference>
<dbReference type="EMBL" id="CP000323">
    <property type="protein sequence ID" value="ABE74288.1"/>
    <property type="molecule type" value="Genomic_DNA"/>
</dbReference>
<dbReference type="RefSeq" id="WP_010196721.1">
    <property type="nucleotide sequence ID" value="NC_007969.1"/>
</dbReference>
<dbReference type="SMR" id="Q1QDG5"/>
<dbReference type="STRING" id="335284.Pcryo_0505"/>
<dbReference type="GeneID" id="60255466"/>
<dbReference type="KEGG" id="pcr:Pcryo_0505"/>
<dbReference type="eggNOG" id="COG0257">
    <property type="taxonomic scope" value="Bacteria"/>
</dbReference>
<dbReference type="HOGENOM" id="CLU_135723_6_2_6"/>
<dbReference type="Proteomes" id="UP000002425">
    <property type="component" value="Chromosome"/>
</dbReference>
<dbReference type="GO" id="GO:0005737">
    <property type="term" value="C:cytoplasm"/>
    <property type="evidence" value="ECO:0007669"/>
    <property type="project" value="UniProtKB-ARBA"/>
</dbReference>
<dbReference type="GO" id="GO:1990904">
    <property type="term" value="C:ribonucleoprotein complex"/>
    <property type="evidence" value="ECO:0007669"/>
    <property type="project" value="UniProtKB-KW"/>
</dbReference>
<dbReference type="GO" id="GO:0005840">
    <property type="term" value="C:ribosome"/>
    <property type="evidence" value="ECO:0007669"/>
    <property type="project" value="UniProtKB-KW"/>
</dbReference>
<dbReference type="GO" id="GO:0003735">
    <property type="term" value="F:structural constituent of ribosome"/>
    <property type="evidence" value="ECO:0007669"/>
    <property type="project" value="InterPro"/>
</dbReference>
<dbReference type="GO" id="GO:0006412">
    <property type="term" value="P:translation"/>
    <property type="evidence" value="ECO:0007669"/>
    <property type="project" value="UniProtKB-UniRule"/>
</dbReference>
<dbReference type="HAMAP" id="MF_00251">
    <property type="entry name" value="Ribosomal_bL36"/>
    <property type="match status" value="1"/>
</dbReference>
<dbReference type="InterPro" id="IPR000473">
    <property type="entry name" value="Ribosomal_bL36"/>
</dbReference>
<dbReference type="InterPro" id="IPR035977">
    <property type="entry name" value="Ribosomal_bL36_sp"/>
</dbReference>
<dbReference type="NCBIfam" id="TIGR01022">
    <property type="entry name" value="rpmJ_bact"/>
    <property type="match status" value="1"/>
</dbReference>
<dbReference type="PANTHER" id="PTHR42888">
    <property type="entry name" value="50S RIBOSOMAL PROTEIN L36, CHLOROPLASTIC"/>
    <property type="match status" value="1"/>
</dbReference>
<dbReference type="PANTHER" id="PTHR42888:SF1">
    <property type="entry name" value="LARGE RIBOSOMAL SUBUNIT PROTEIN BL36C"/>
    <property type="match status" value="1"/>
</dbReference>
<dbReference type="Pfam" id="PF00444">
    <property type="entry name" value="Ribosomal_L36"/>
    <property type="match status" value="1"/>
</dbReference>
<dbReference type="SUPFAM" id="SSF57840">
    <property type="entry name" value="Ribosomal protein L36"/>
    <property type="match status" value="1"/>
</dbReference>
<dbReference type="PROSITE" id="PS00828">
    <property type="entry name" value="RIBOSOMAL_L36"/>
    <property type="match status" value="1"/>
</dbReference>
<comment type="similarity">
    <text evidence="1">Belongs to the bacterial ribosomal protein bL36 family.</text>
</comment>